<accession>P25023</accession>
<reference key="1">
    <citation type="journal article" date="1991" name="Proc. Natl. Acad. Sci. U.S.A.">
        <title>Expression cloning of a rat B2 bradykinin receptor.</title>
        <authorList>
            <person name="McEachern A.E."/>
            <person name="Shelton E.R."/>
            <person name="Bhakta S."/>
            <person name="Obernolte R."/>
            <person name="Bach C."/>
            <person name="Zuppan P."/>
            <person name="Fujisaki J."/>
            <person name="Aldrich R.W."/>
            <person name="Jarnagin K."/>
        </authorList>
    </citation>
    <scope>NUCLEOTIDE SEQUENCE [MRNA]</scope>
    <scope>FUNCTION</scope>
    <source>
        <tissue>Uterus</tissue>
    </source>
</reference>
<reference key="2">
    <citation type="journal article" date="1994" name="J. Biol. Chem.">
        <title>Molecular structure and expression of rat bradykinin B2 receptor gene. Evidence for alternative splicing.</title>
        <authorList>
            <person name="Pesquero J.B."/>
            <person name="Lindsey C.J."/>
            <person name="Zeh K."/>
            <person name="Paiva A.C.M."/>
            <person name="Ganten D."/>
            <person name="Bader M."/>
        </authorList>
    </citation>
    <scope>NUCLEOTIDE SEQUENCE [GENOMIC DNA] (ISOFORM SHORT)</scope>
    <source>
        <strain>Sprague-Dawley</strain>
    </source>
</reference>
<reference key="3">
    <citation type="submission" date="1996-06" db="EMBL/GenBank/DDBJ databases">
        <authorList>
            <person name="Bader M."/>
        </authorList>
    </citation>
    <scope>SEQUENCE REVISION</scope>
</reference>
<reference key="4">
    <citation type="journal article" date="1994" name="Biochim. Biophys. Acta">
        <title>Molecular cloning and sequence analysis of rat bradykinin B2 receptor gene.</title>
        <authorList>
            <person name="Wang D.Z."/>
            <person name="Ma J.X."/>
            <person name="Chao L."/>
            <person name="Chao J."/>
        </authorList>
    </citation>
    <scope>NUCLEOTIDE SEQUENCE [GENOMIC DNA] (ISOFORM SHORT)</scope>
    <source>
        <strain>Sprague-Dawley</strain>
    </source>
</reference>
<reference key="5">
    <citation type="journal article" date="1993" name="Mol. Pharmacol.">
        <title>Cloned murine bradykinin receptor exhibits a mixed B1 and B2 pharmacological selectivity.</title>
        <authorList>
            <person name="McIntyre P."/>
            <person name="Phillips E."/>
            <person name="Skidmore E."/>
            <person name="Brown M."/>
            <person name="Webb M."/>
        </authorList>
    </citation>
    <scope>NUCLEOTIDE SEQUENCE [MRNA] (ISOFORM SHORT)</scope>
    <source>
        <strain>Sprague-Dawley</strain>
        <tissue>Lung</tissue>
    </source>
</reference>
<reference key="6">
    <citation type="journal article" date="1996" name="Biochemistry">
        <title>Structure of the bradykinin B2 receptors' amino terminus.</title>
        <authorList>
            <person name="Abdalla S."/>
            <person name="Godovac-Zimmermann J."/>
            <person name="Braun A."/>
            <person name="Roscher A.A."/>
            <person name="Mueller-Esterl W."/>
            <person name="Quitterer U."/>
        </authorList>
    </citation>
    <scope>PROTEIN SEQUENCE OF 1-18</scope>
</reference>
<reference key="7">
    <citation type="journal article" date="1999" name="J. Biol. Chem.">
        <title>Correlations in palmitoylation and multiple phosphorylation of rat bradykinin B2 receptor in Chinese hamster ovary cells.</title>
        <authorList>
            <person name="Soskic V."/>
            <person name="Nyakatura E."/>
            <person name="Roos M."/>
            <person name="Mueller-Esterl W."/>
            <person name="Godovac-Zimmermann J."/>
        </authorList>
    </citation>
    <scope>PALMITOYLATION AT CYS-356</scope>
    <scope>PHOSPHORYLATION AT TYR-161; TYR-352; SER-365; SER-371; THR-374; SER-378 AND SER-380</scope>
    <scope>IDENTIFICATION BY MASS SPECTROMETRY</scope>
</reference>
<protein>
    <recommendedName>
        <fullName>B2 bradykinin receptor</fullName>
        <shortName>B2R</shortName>
        <shortName>BK-2 receptor</shortName>
    </recommendedName>
</protein>
<evidence type="ECO:0000250" key="1">
    <source>
        <dbReference type="UniProtKB" id="P30411"/>
    </source>
</evidence>
<evidence type="ECO:0000255" key="2"/>
<evidence type="ECO:0000255" key="3">
    <source>
        <dbReference type="PROSITE-ProRule" id="PRU00521"/>
    </source>
</evidence>
<evidence type="ECO:0000269" key="4">
    <source>
    </source>
</evidence>
<evidence type="ECO:0000269" key="5">
    <source>
    </source>
</evidence>
<evidence type="ECO:0000303" key="6">
    <source>
    </source>
</evidence>
<evidence type="ECO:0000305" key="7"/>
<keyword id="KW-0025">Alternative splicing</keyword>
<keyword id="KW-1003">Cell membrane</keyword>
<keyword id="KW-0903">Direct protein sequencing</keyword>
<keyword id="KW-1015">Disulfide bond</keyword>
<keyword id="KW-0297">G-protein coupled receptor</keyword>
<keyword id="KW-0325">Glycoprotein</keyword>
<keyword id="KW-0449">Lipoprotein</keyword>
<keyword id="KW-0472">Membrane</keyword>
<keyword id="KW-0564">Palmitate</keyword>
<keyword id="KW-0597">Phosphoprotein</keyword>
<keyword id="KW-0675">Receptor</keyword>
<keyword id="KW-1185">Reference proteome</keyword>
<keyword id="KW-0807">Transducer</keyword>
<keyword id="KW-0812">Transmembrane</keyword>
<keyword id="KW-1133">Transmembrane helix</keyword>
<comment type="function">
    <text evidence="5">Receptor for bradykinin. It is associated with G proteins that activate a phosphatidylinositol-calcium second messenger system.</text>
</comment>
<comment type="subunit">
    <text evidence="1">Forms a complex with PECAM1 and GNAQ. Interacts with PECAM1 (By similarity).</text>
</comment>
<comment type="subcellular location">
    <subcellularLocation>
        <location evidence="1">Cell membrane</location>
        <topology evidence="2">Multi-pass membrane protein</topology>
    </subcellularLocation>
</comment>
<comment type="alternative products">
    <event type="alternative splicing"/>
    <isoform>
        <id>P25023-1</id>
        <name>Long</name>
        <sequence type="displayed"/>
    </isoform>
    <isoform>
        <id>P25023-2</id>
        <name>Short</name>
        <sequence type="described" ref="VSP_001867"/>
    </isoform>
</comment>
<comment type="tissue specificity">
    <text>Uterus, vas deferens, kidney, ileum, heart, testis, lung and brain.</text>
</comment>
<comment type="PTM">
    <text>Diphosphorylation at Ser-365 and Ser-371, at Ser-378 and Ser-380, and at Thr-374 and Ser-380 seem to be correlated pairwise.</text>
</comment>
<comment type="PTM">
    <text evidence="4">Palmitoylation at Cys-356 and phosphorylation at Tyr-352 seem to be mutually exclusive.</text>
</comment>
<comment type="similarity">
    <text evidence="3">Belongs to the G-protein coupled receptor 1 family. Bradykinin receptor subfamily. BDKRB2 sub-subfamily.</text>
</comment>
<sequence>MDTRSSLCPKTQAVVAVFWGPGCHLSTCIEMFNITTQALGSAHNGTFSEVNCPDTEWWSWLNAIQAPFLWVLFLLAALENIFVLSVFCLHKTNCTVAEIYLGNLAAADLILACGLPFWAITIANNFDWLFGEVLCRVVNTMIYMNLYSSICFLMLVSIDRYLALVKTMSMGRMRGVRWAKLYSLVIWSCTLLLSSPMLVFRTMKDYREEGHNVTACVIVYPSRSWEVFTNMLLNLVGFLLPLSIITFCTVRIMQVLRNNEMKKFKEVQTEKKATVLVLAVLGLFVLCWFPFQISTFLDTLLRLGVLSGCWNERAVDIVTQISSYVAYSNSCLNPLVYVIVGKRFRKKSREVYQAICRKGGCMGESVQMENSMGTLRTSISVDRQIHKLQDWAGNKQ</sequence>
<proteinExistence type="evidence at protein level"/>
<feature type="chain" id="PRO_0000069194" description="B2 bradykinin receptor">
    <location>
        <begin position="1"/>
        <end position="396"/>
    </location>
</feature>
<feature type="topological domain" description="Extracellular" evidence="2">
    <location>
        <begin position="1"/>
        <end position="65"/>
    </location>
</feature>
<feature type="transmembrane region" description="Helical; Name=1" evidence="2">
    <location>
        <begin position="66"/>
        <end position="89"/>
    </location>
</feature>
<feature type="topological domain" description="Cytoplasmic" evidence="2">
    <location>
        <begin position="90"/>
        <end position="98"/>
    </location>
</feature>
<feature type="transmembrane region" description="Helical; Name=2" evidence="2">
    <location>
        <begin position="99"/>
        <end position="123"/>
    </location>
</feature>
<feature type="topological domain" description="Extracellular" evidence="2">
    <location>
        <begin position="124"/>
        <end position="136"/>
    </location>
</feature>
<feature type="transmembrane region" description="Helical; Name=3" evidence="2">
    <location>
        <begin position="137"/>
        <end position="158"/>
    </location>
</feature>
<feature type="topological domain" description="Cytoplasmic" evidence="2">
    <location>
        <begin position="159"/>
        <end position="180"/>
    </location>
</feature>
<feature type="transmembrane region" description="Helical; Name=4" evidence="2">
    <location>
        <begin position="181"/>
        <end position="203"/>
    </location>
</feature>
<feature type="topological domain" description="Extracellular" evidence="2">
    <location>
        <begin position="204"/>
        <end position="226"/>
    </location>
</feature>
<feature type="transmembrane region" description="Helical; Name=5" evidence="2">
    <location>
        <begin position="227"/>
        <end position="253"/>
    </location>
</feature>
<feature type="topological domain" description="Cytoplasmic" evidence="2">
    <location>
        <begin position="254"/>
        <end position="272"/>
    </location>
</feature>
<feature type="transmembrane region" description="Helical; Name=6" evidence="2">
    <location>
        <begin position="273"/>
        <end position="297"/>
    </location>
</feature>
<feature type="topological domain" description="Extracellular" evidence="2">
    <location>
        <begin position="298"/>
        <end position="316"/>
    </location>
</feature>
<feature type="transmembrane region" description="Helical; Name=7" evidence="2">
    <location>
        <begin position="317"/>
        <end position="340"/>
    </location>
</feature>
<feature type="topological domain" description="Cytoplasmic" evidence="2">
    <location>
        <begin position="341"/>
        <end position="396"/>
    </location>
</feature>
<feature type="modified residue" description="Phosphotyrosine" evidence="4">
    <location>
        <position position="161"/>
    </location>
</feature>
<feature type="modified residue" description="Phosphotyrosine" evidence="4">
    <location>
        <position position="352"/>
    </location>
</feature>
<feature type="modified residue" description="Phosphoserine" evidence="4">
    <location>
        <position position="365"/>
    </location>
</feature>
<feature type="modified residue" description="Phosphoserine" evidence="4">
    <location>
        <position position="371"/>
    </location>
</feature>
<feature type="modified residue" description="Phosphothreonine" evidence="4">
    <location>
        <position position="374"/>
    </location>
</feature>
<feature type="modified residue" description="Phosphoserine; by GRK6" evidence="4">
    <location>
        <position position="378"/>
    </location>
</feature>
<feature type="modified residue" description="Phosphoserine; by GRK6" evidence="4">
    <location>
        <position position="380"/>
    </location>
</feature>
<feature type="lipid moiety-binding region" description="S-palmitoyl cysteine" evidence="4">
    <location>
        <position position="356"/>
    </location>
</feature>
<feature type="glycosylation site" description="N-linked (GlcNAc...) asparagine" evidence="2">
    <location>
        <position position="33"/>
    </location>
</feature>
<feature type="glycosylation site" description="N-linked (GlcNAc...) asparagine" evidence="2">
    <location>
        <position position="44"/>
    </location>
</feature>
<feature type="glycosylation site" description="N-linked (GlcNAc...) asparagine" evidence="2">
    <location>
        <position position="212"/>
    </location>
</feature>
<feature type="disulfide bond" evidence="3">
    <location>
        <begin position="135"/>
        <end position="216"/>
    </location>
</feature>
<feature type="splice variant" id="VSP_001867" description="In isoform Short." evidence="6">
    <location>
        <begin position="1"/>
        <end position="30"/>
    </location>
</feature>
<feature type="sequence conflict" description="In Ref. 2 and 4." evidence="7" ref="2 4">
    <original>A</original>
    <variation>G</variation>
    <location>
        <position position="106"/>
    </location>
</feature>
<dbReference type="EMBL" id="M59967">
    <property type="protein sequence ID" value="AAA16425.1"/>
    <property type="molecule type" value="mRNA"/>
</dbReference>
<dbReference type="EMBL" id="M59967">
    <property type="protein sequence ID" value="AAA16426.1"/>
    <property type="molecule type" value="mRNA"/>
</dbReference>
<dbReference type="EMBL" id="X80187">
    <property type="status" value="NOT_ANNOTATED_CDS"/>
    <property type="molecule type" value="Genomic_DNA"/>
</dbReference>
<dbReference type="EMBL" id="X80188">
    <property type="status" value="NOT_ANNOTATED_CDS"/>
    <property type="molecule type" value="Genomic_DNA"/>
</dbReference>
<dbReference type="EMBL" id="X80189">
    <property type="status" value="NOT_ANNOTATED_CDS"/>
    <property type="molecule type" value="Genomic_DNA"/>
</dbReference>
<dbReference type="EMBL" id="X80190">
    <property type="status" value="NOT_ANNOTATED_CDS"/>
    <property type="molecule type" value="Genomic_DNA"/>
</dbReference>
<dbReference type="EMBL" id="L26173">
    <property type="protein sequence ID" value="AAA62492.1"/>
    <property type="molecule type" value="Genomic_DNA"/>
</dbReference>
<dbReference type="EMBL" id="X69681">
    <property type="protein sequence ID" value="CAA49361.1"/>
    <property type="molecule type" value="mRNA"/>
</dbReference>
<dbReference type="PIR" id="A41283">
    <property type="entry name" value="OORTB2"/>
</dbReference>
<dbReference type="RefSeq" id="NP_775123.2">
    <property type="nucleotide sequence ID" value="NM_173100.2"/>
</dbReference>
<dbReference type="SMR" id="P25023"/>
<dbReference type="CORUM" id="P25023"/>
<dbReference type="FunCoup" id="P25023">
    <property type="interactions" value="209"/>
</dbReference>
<dbReference type="STRING" id="10116.ENSRNOP00000064990"/>
<dbReference type="BindingDB" id="P25023"/>
<dbReference type="ChEMBL" id="CHEMBL2501"/>
<dbReference type="DrugCentral" id="P25023"/>
<dbReference type="GuidetoPHARMACOLOGY" id="42"/>
<dbReference type="GlyCosmos" id="P25023">
    <property type="glycosylation" value="3 sites, No reported glycans"/>
</dbReference>
<dbReference type="GlyGen" id="P25023">
    <property type="glycosylation" value="3 sites"/>
</dbReference>
<dbReference type="iPTMnet" id="P25023"/>
<dbReference type="PhosphoSitePlus" id="P25023"/>
<dbReference type="SwissPalm" id="P25023"/>
<dbReference type="PaxDb" id="10116-ENSRNOP00000064990"/>
<dbReference type="GeneID" id="25245"/>
<dbReference type="KEGG" id="rno:25245"/>
<dbReference type="UCSC" id="RGD:2201">
    <molecule id="P25023-1"/>
    <property type="organism name" value="rat"/>
</dbReference>
<dbReference type="AGR" id="RGD:2201"/>
<dbReference type="CTD" id="624"/>
<dbReference type="RGD" id="2201">
    <property type="gene designation" value="Bdkrb2"/>
</dbReference>
<dbReference type="eggNOG" id="ENOG502QTX6">
    <property type="taxonomic scope" value="Eukaryota"/>
</dbReference>
<dbReference type="InParanoid" id="P25023"/>
<dbReference type="PhylomeDB" id="P25023"/>
<dbReference type="Reactome" id="R-RNO-375276">
    <property type="pathway name" value="Peptide ligand-binding receptors"/>
</dbReference>
<dbReference type="Reactome" id="R-RNO-416476">
    <property type="pathway name" value="G alpha (q) signalling events"/>
</dbReference>
<dbReference type="Reactome" id="R-RNO-418594">
    <property type="pathway name" value="G alpha (i) signalling events"/>
</dbReference>
<dbReference type="PRO" id="PR:P25023"/>
<dbReference type="Proteomes" id="UP000002494">
    <property type="component" value="Unplaced"/>
</dbReference>
<dbReference type="GO" id="GO:0005768">
    <property type="term" value="C:endosome"/>
    <property type="evidence" value="ECO:0000266"/>
    <property type="project" value="RGD"/>
</dbReference>
<dbReference type="GO" id="GO:0005886">
    <property type="term" value="C:plasma membrane"/>
    <property type="evidence" value="ECO:0000266"/>
    <property type="project" value="RGD"/>
</dbReference>
<dbReference type="GO" id="GO:0031698">
    <property type="term" value="F:beta-2 adrenergic receptor binding"/>
    <property type="evidence" value="ECO:0000353"/>
    <property type="project" value="RGD"/>
</dbReference>
<dbReference type="GO" id="GO:0004947">
    <property type="term" value="F:bradykinin receptor activity"/>
    <property type="evidence" value="ECO:0000314"/>
    <property type="project" value="RGD"/>
</dbReference>
<dbReference type="GO" id="GO:0002020">
    <property type="term" value="F:protease binding"/>
    <property type="evidence" value="ECO:0000266"/>
    <property type="project" value="RGD"/>
</dbReference>
<dbReference type="GO" id="GO:0046982">
    <property type="term" value="F:protein heterodimerization activity"/>
    <property type="evidence" value="ECO:0000266"/>
    <property type="project" value="RGD"/>
</dbReference>
<dbReference type="GO" id="GO:0031702">
    <property type="term" value="F:type 1 angiotensin receptor binding"/>
    <property type="evidence" value="ECO:0000266"/>
    <property type="project" value="RGD"/>
</dbReference>
<dbReference type="GO" id="GO:0002438">
    <property type="term" value="P:acute inflammatory response to antigenic stimulus"/>
    <property type="evidence" value="ECO:0000315"/>
    <property type="project" value="RGD"/>
</dbReference>
<dbReference type="GO" id="GO:0050482">
    <property type="term" value="P:arachidonate secretion"/>
    <property type="evidence" value="ECO:0000266"/>
    <property type="project" value="RGD"/>
</dbReference>
<dbReference type="GO" id="GO:0071456">
    <property type="term" value="P:cellular response to hypoxia"/>
    <property type="evidence" value="ECO:0000270"/>
    <property type="project" value="RGD"/>
</dbReference>
<dbReference type="GO" id="GO:0007186">
    <property type="term" value="P:G protein-coupled receptor signaling pathway"/>
    <property type="evidence" value="ECO:0000318"/>
    <property type="project" value="GO_Central"/>
</dbReference>
<dbReference type="GO" id="GO:1990127">
    <property type="term" value="P:intrinsic apoptotic signaling pathway in response to osmotic stress by p53 class mediator"/>
    <property type="evidence" value="ECO:0000266"/>
    <property type="project" value="RGD"/>
</dbReference>
<dbReference type="GO" id="GO:0035633">
    <property type="term" value="P:maintenance of blood-brain barrier"/>
    <property type="evidence" value="ECO:0000314"/>
    <property type="project" value="RGD"/>
</dbReference>
<dbReference type="GO" id="GO:0045776">
    <property type="term" value="P:negative regulation of blood pressure"/>
    <property type="evidence" value="ECO:0000315"/>
    <property type="project" value="RGD"/>
</dbReference>
<dbReference type="GO" id="GO:0008285">
    <property type="term" value="P:negative regulation of cell population proliferation"/>
    <property type="evidence" value="ECO:0000315"/>
    <property type="project" value="RGD"/>
</dbReference>
<dbReference type="GO" id="GO:1902219">
    <property type="term" value="P:negative regulation of intrinsic apoptotic signaling pathway in response to osmotic stress"/>
    <property type="evidence" value="ECO:0000266"/>
    <property type="project" value="RGD"/>
</dbReference>
<dbReference type="GO" id="GO:1902239">
    <property type="term" value="P:negative regulation of intrinsic apoptotic signaling pathway in response to osmotic stress by p53 class mediator"/>
    <property type="evidence" value="ECO:0000266"/>
    <property type="project" value="RGD"/>
</dbReference>
<dbReference type="GO" id="GO:0007204">
    <property type="term" value="P:positive regulation of cytosolic calcium ion concentration"/>
    <property type="evidence" value="ECO:0000315"/>
    <property type="project" value="RGD"/>
</dbReference>
<dbReference type="GO" id="GO:1900073">
    <property type="term" value="P:regulation of neuromuscular synaptic transmission"/>
    <property type="evidence" value="ECO:0000266"/>
    <property type="project" value="RGD"/>
</dbReference>
<dbReference type="GO" id="GO:0009651">
    <property type="term" value="P:response to salt stress"/>
    <property type="evidence" value="ECO:0000266"/>
    <property type="project" value="RGD"/>
</dbReference>
<dbReference type="GO" id="GO:0009410">
    <property type="term" value="P:response to xenobiotic stimulus"/>
    <property type="evidence" value="ECO:0000270"/>
    <property type="project" value="RGD"/>
</dbReference>
<dbReference type="GO" id="GO:0014832">
    <property type="term" value="P:urinary bladder smooth muscle contraction"/>
    <property type="evidence" value="ECO:0000266"/>
    <property type="project" value="RGD"/>
</dbReference>
<dbReference type="GO" id="GO:0042310">
    <property type="term" value="P:vasoconstriction"/>
    <property type="evidence" value="ECO:0007669"/>
    <property type="project" value="InterPro"/>
</dbReference>
<dbReference type="GO" id="GO:0042311">
    <property type="term" value="P:vasodilation"/>
    <property type="evidence" value="ECO:0000266"/>
    <property type="project" value="RGD"/>
</dbReference>
<dbReference type="CDD" id="cd15381">
    <property type="entry name" value="7tmA_BK-2"/>
    <property type="match status" value="1"/>
</dbReference>
<dbReference type="FunFam" id="1.20.1070.10:FF:000201">
    <property type="entry name" value="Bradykinin receptor B2"/>
    <property type="match status" value="1"/>
</dbReference>
<dbReference type="Gene3D" id="1.20.1070.10">
    <property type="entry name" value="Rhodopsin 7-helix transmembrane proteins"/>
    <property type="match status" value="1"/>
</dbReference>
<dbReference type="InterPro" id="IPR001504">
    <property type="entry name" value="Brdyknn_2_rcpt"/>
</dbReference>
<dbReference type="InterPro" id="IPR000496">
    <property type="entry name" value="Brdyknn_rcpt"/>
</dbReference>
<dbReference type="InterPro" id="IPR050119">
    <property type="entry name" value="CCR1-9-like"/>
</dbReference>
<dbReference type="InterPro" id="IPR000276">
    <property type="entry name" value="GPCR_Rhodpsn"/>
</dbReference>
<dbReference type="InterPro" id="IPR017452">
    <property type="entry name" value="GPCR_Rhodpsn_7TM"/>
</dbReference>
<dbReference type="PANTHER" id="PTHR10489:SF957">
    <property type="entry name" value="B2 BRADYKININ RECEPTOR"/>
    <property type="match status" value="1"/>
</dbReference>
<dbReference type="PANTHER" id="PTHR10489">
    <property type="entry name" value="CELL ADHESION MOLECULE"/>
    <property type="match status" value="1"/>
</dbReference>
<dbReference type="Pfam" id="PF00001">
    <property type="entry name" value="7tm_1"/>
    <property type="match status" value="1"/>
</dbReference>
<dbReference type="PRINTS" id="PR00425">
    <property type="entry name" value="BRADYKININR"/>
</dbReference>
<dbReference type="PRINTS" id="PR00994">
    <property type="entry name" value="BRADYKINNB2R"/>
</dbReference>
<dbReference type="PRINTS" id="PR00237">
    <property type="entry name" value="GPCRRHODOPSN"/>
</dbReference>
<dbReference type="SUPFAM" id="SSF81321">
    <property type="entry name" value="Family A G protein-coupled receptor-like"/>
    <property type="match status" value="1"/>
</dbReference>
<dbReference type="PROSITE" id="PS00237">
    <property type="entry name" value="G_PROTEIN_RECEP_F1_1"/>
    <property type="match status" value="1"/>
</dbReference>
<dbReference type="PROSITE" id="PS50262">
    <property type="entry name" value="G_PROTEIN_RECEP_F1_2"/>
    <property type="match status" value="1"/>
</dbReference>
<name>BKRB2_RAT</name>
<organism>
    <name type="scientific">Rattus norvegicus</name>
    <name type="common">Rat</name>
    <dbReference type="NCBI Taxonomy" id="10116"/>
    <lineage>
        <taxon>Eukaryota</taxon>
        <taxon>Metazoa</taxon>
        <taxon>Chordata</taxon>
        <taxon>Craniata</taxon>
        <taxon>Vertebrata</taxon>
        <taxon>Euteleostomi</taxon>
        <taxon>Mammalia</taxon>
        <taxon>Eutheria</taxon>
        <taxon>Euarchontoglires</taxon>
        <taxon>Glires</taxon>
        <taxon>Rodentia</taxon>
        <taxon>Myomorpha</taxon>
        <taxon>Muroidea</taxon>
        <taxon>Muridae</taxon>
        <taxon>Murinae</taxon>
        <taxon>Rattus</taxon>
    </lineage>
</organism>
<gene>
    <name type="primary">Bdkrb2</name>
</gene>